<sequence>MAATDVQRASNEEKRSLAMSGHVGFDSLPDQLVSKSVTQGFCFNILCVGETGIGKSTLMNTLFNTTFETEEASHYENGVCLRPRTYDLQESNVHLKLTIVDTVGFGDQINKDDSYRSVVDYIDTQFENYLQEELKIRRSLFNFHDSRIHVCLYFITPTGHSLKSLDLVTMKKLDSKVNIIPIIAKADTISKSELHKFKIKIMSELVSNGVQIYQFPTDDDAVAEINSVMNAHLPFAVVGSTEEVKVGNKLVRARQYPWGVVQVENESHCDFVKLREMLIRVNMEDLREQTHTRHYELYRRCKLEEMGFKDNDPDTQPFSLQETYEAKRKEFLSELQRKEEEMRQMFVNKVKETEAELKERERELQEKFMQLKRIHQEESKKVEDKRRDLEEEMNSFNRRKAAMEALQSQSFQATSQQPLKKDKDRKN</sequence>
<evidence type="ECO:0000250" key="1"/>
<evidence type="ECO:0000255" key="2"/>
<evidence type="ECO:0000255" key="3">
    <source>
        <dbReference type="PROSITE-ProRule" id="PRU01056"/>
    </source>
</evidence>
<evidence type="ECO:0000256" key="4">
    <source>
        <dbReference type="SAM" id="MobiDB-lite"/>
    </source>
</evidence>
<feature type="chain" id="PRO_0000363231" description="Septin-8-A">
    <location>
        <begin position="1"/>
        <end position="427"/>
    </location>
</feature>
<feature type="domain" description="Septin-type G" evidence="3">
    <location>
        <begin position="39"/>
        <end position="305"/>
    </location>
</feature>
<feature type="region of interest" description="G1 motif" evidence="3">
    <location>
        <begin position="49"/>
        <end position="56"/>
    </location>
</feature>
<feature type="region of interest" description="G3 motif" evidence="3">
    <location>
        <begin position="101"/>
        <end position="104"/>
    </location>
</feature>
<feature type="region of interest" description="G4 motif" evidence="3">
    <location>
        <begin position="184"/>
        <end position="187"/>
    </location>
</feature>
<feature type="region of interest" description="Disordered" evidence="4">
    <location>
        <begin position="376"/>
        <end position="427"/>
    </location>
</feature>
<feature type="coiled-coil region" evidence="2">
    <location>
        <begin position="320"/>
        <end position="409"/>
    </location>
</feature>
<feature type="compositionally biased region" description="Basic and acidic residues" evidence="4">
    <location>
        <begin position="376"/>
        <end position="389"/>
    </location>
</feature>
<feature type="compositionally biased region" description="Polar residues" evidence="4">
    <location>
        <begin position="406"/>
        <end position="418"/>
    </location>
</feature>
<feature type="binding site" evidence="1">
    <location>
        <begin position="49"/>
        <end position="56"/>
    </location>
    <ligand>
        <name>GTP</name>
        <dbReference type="ChEBI" id="CHEBI:37565"/>
    </ligand>
</feature>
<feature type="binding site" evidence="1">
    <location>
        <position position="104"/>
    </location>
    <ligand>
        <name>GTP</name>
        <dbReference type="ChEBI" id="CHEBI:37565"/>
    </ligand>
</feature>
<feature type="binding site" evidence="1">
    <location>
        <begin position="185"/>
        <end position="193"/>
    </location>
    <ligand>
        <name>GTP</name>
        <dbReference type="ChEBI" id="CHEBI:37565"/>
    </ligand>
</feature>
<feature type="binding site" evidence="1">
    <location>
        <position position="239"/>
    </location>
    <ligand>
        <name>GTP</name>
        <dbReference type="ChEBI" id="CHEBI:37565"/>
    </ligand>
</feature>
<feature type="binding site" evidence="1">
    <location>
        <position position="254"/>
    </location>
    <ligand>
        <name>GTP</name>
        <dbReference type="ChEBI" id="CHEBI:37565"/>
    </ligand>
</feature>
<reference key="1">
    <citation type="submission" date="2004-08" db="EMBL/GenBank/DDBJ databases">
        <authorList>
            <consortium name="NIH - Xenopus Gene Collection (XGC) project"/>
        </authorList>
    </citation>
    <scope>NUCLEOTIDE SEQUENCE [LARGE SCALE MRNA]</scope>
    <source>
        <tissue>Ovary</tissue>
    </source>
</reference>
<dbReference type="EMBL" id="BC079687">
    <property type="protein sequence ID" value="AAH79687.1"/>
    <property type="molecule type" value="mRNA"/>
</dbReference>
<dbReference type="RefSeq" id="NP_001087375.1">
    <property type="nucleotide sequence ID" value="NM_001093906.1"/>
</dbReference>
<dbReference type="SMR" id="Q6AXA6"/>
<dbReference type="BioGRID" id="104059">
    <property type="interactions" value="1"/>
</dbReference>
<dbReference type="IntAct" id="Q6AXA6">
    <property type="interactions" value="1"/>
</dbReference>
<dbReference type="DNASU" id="447199"/>
<dbReference type="GeneID" id="447199"/>
<dbReference type="KEGG" id="xla:447199"/>
<dbReference type="AGR" id="Xenbase:XB-GENE-1032912"/>
<dbReference type="CTD" id="447199"/>
<dbReference type="Xenbase" id="XB-GENE-1032912">
    <property type="gene designation" value="septin8.L"/>
</dbReference>
<dbReference type="OrthoDB" id="416553at2759"/>
<dbReference type="Proteomes" id="UP000186698">
    <property type="component" value="Chromosome 3L"/>
</dbReference>
<dbReference type="Bgee" id="447199">
    <property type="expression patterns" value="Expressed in internal ear and 19 other cell types or tissues"/>
</dbReference>
<dbReference type="GO" id="GO:0032153">
    <property type="term" value="C:cell division site"/>
    <property type="evidence" value="ECO:0000318"/>
    <property type="project" value="GO_Central"/>
</dbReference>
<dbReference type="GO" id="GO:0015630">
    <property type="term" value="C:microtubule cytoskeleton"/>
    <property type="evidence" value="ECO:0000318"/>
    <property type="project" value="GO_Central"/>
</dbReference>
<dbReference type="GO" id="GO:0031105">
    <property type="term" value="C:septin complex"/>
    <property type="evidence" value="ECO:0000318"/>
    <property type="project" value="GO_Central"/>
</dbReference>
<dbReference type="GO" id="GO:0005940">
    <property type="term" value="C:septin ring"/>
    <property type="evidence" value="ECO:0000318"/>
    <property type="project" value="GO_Central"/>
</dbReference>
<dbReference type="GO" id="GO:0005525">
    <property type="term" value="F:GTP binding"/>
    <property type="evidence" value="ECO:0007669"/>
    <property type="project" value="UniProtKB-KW"/>
</dbReference>
<dbReference type="GO" id="GO:0003924">
    <property type="term" value="F:GTPase activity"/>
    <property type="evidence" value="ECO:0000318"/>
    <property type="project" value="GO_Central"/>
</dbReference>
<dbReference type="GO" id="GO:0060090">
    <property type="term" value="F:molecular adaptor activity"/>
    <property type="evidence" value="ECO:0000318"/>
    <property type="project" value="GO_Central"/>
</dbReference>
<dbReference type="GO" id="GO:0061640">
    <property type="term" value="P:cytoskeleton-dependent cytokinesis"/>
    <property type="evidence" value="ECO:0000318"/>
    <property type="project" value="GO_Central"/>
</dbReference>
<dbReference type="GO" id="GO:0008104">
    <property type="term" value="P:protein localization"/>
    <property type="evidence" value="ECO:0000318"/>
    <property type="project" value="GO_Central"/>
</dbReference>
<dbReference type="CDD" id="cd01850">
    <property type="entry name" value="CDC_Septin"/>
    <property type="match status" value="1"/>
</dbReference>
<dbReference type="FunFam" id="3.40.50.300:FF:000036">
    <property type="entry name" value="septin-6 isoform X2"/>
    <property type="match status" value="1"/>
</dbReference>
<dbReference type="Gene3D" id="3.40.50.300">
    <property type="entry name" value="P-loop containing nucleotide triphosphate hydrolases"/>
    <property type="match status" value="1"/>
</dbReference>
<dbReference type="InterPro" id="IPR030379">
    <property type="entry name" value="G_SEPTIN_dom"/>
</dbReference>
<dbReference type="InterPro" id="IPR027417">
    <property type="entry name" value="P-loop_NTPase"/>
</dbReference>
<dbReference type="InterPro" id="IPR016491">
    <property type="entry name" value="Septin"/>
</dbReference>
<dbReference type="PANTHER" id="PTHR18884">
    <property type="entry name" value="SEPTIN"/>
    <property type="match status" value="1"/>
</dbReference>
<dbReference type="Pfam" id="PF00735">
    <property type="entry name" value="Septin"/>
    <property type="match status" value="1"/>
</dbReference>
<dbReference type="PIRSF" id="PIRSF006698">
    <property type="entry name" value="Septin"/>
    <property type="match status" value="1"/>
</dbReference>
<dbReference type="SUPFAM" id="SSF52540">
    <property type="entry name" value="P-loop containing nucleoside triphosphate hydrolases"/>
    <property type="match status" value="1"/>
</dbReference>
<dbReference type="PROSITE" id="PS51719">
    <property type="entry name" value="G_SEPTIN"/>
    <property type="match status" value="1"/>
</dbReference>
<accession>Q6AXA6</accession>
<proteinExistence type="evidence at transcript level"/>
<protein>
    <recommendedName>
        <fullName>Septin-8-A</fullName>
    </recommendedName>
</protein>
<name>SEP8A_XENLA</name>
<keyword id="KW-0175">Coiled coil</keyword>
<keyword id="KW-0342">GTP-binding</keyword>
<keyword id="KW-0547">Nucleotide-binding</keyword>
<keyword id="KW-1185">Reference proteome</keyword>
<gene>
    <name type="primary">sept8-a</name>
</gene>
<organism>
    <name type="scientific">Xenopus laevis</name>
    <name type="common">African clawed frog</name>
    <dbReference type="NCBI Taxonomy" id="8355"/>
    <lineage>
        <taxon>Eukaryota</taxon>
        <taxon>Metazoa</taxon>
        <taxon>Chordata</taxon>
        <taxon>Craniata</taxon>
        <taxon>Vertebrata</taxon>
        <taxon>Euteleostomi</taxon>
        <taxon>Amphibia</taxon>
        <taxon>Batrachia</taxon>
        <taxon>Anura</taxon>
        <taxon>Pipoidea</taxon>
        <taxon>Pipidae</taxon>
        <taxon>Xenopodinae</taxon>
        <taxon>Xenopus</taxon>
        <taxon>Xenopus</taxon>
    </lineage>
</organism>
<comment type="similarity">
    <text evidence="3">Belongs to the TRAFAC class TrmE-Era-EngA-EngB-Septin-like GTPase superfamily. Septin GTPase family.</text>
</comment>